<dbReference type="EC" id="6.1.1.3" evidence="1"/>
<dbReference type="EMBL" id="CR767821">
    <property type="protein sequence ID" value="CAH58624.1"/>
    <property type="molecule type" value="Genomic_DNA"/>
</dbReference>
<dbReference type="EMBL" id="CR925678">
    <property type="protein sequence ID" value="CAI27435.1"/>
    <property type="molecule type" value="Genomic_DNA"/>
</dbReference>
<dbReference type="RefSeq" id="WP_011155567.1">
    <property type="nucleotide sequence ID" value="NC_005295.2"/>
</dbReference>
<dbReference type="SMR" id="Q5H9Z4"/>
<dbReference type="GeneID" id="33058070"/>
<dbReference type="KEGG" id="eru:Erum8890"/>
<dbReference type="KEGG" id="erw:ERWE_CDS_09410"/>
<dbReference type="eggNOG" id="COG0441">
    <property type="taxonomic scope" value="Bacteria"/>
</dbReference>
<dbReference type="HOGENOM" id="CLU_008554_0_1_5"/>
<dbReference type="Proteomes" id="UP000001021">
    <property type="component" value="Chromosome"/>
</dbReference>
<dbReference type="GO" id="GO:0005737">
    <property type="term" value="C:cytoplasm"/>
    <property type="evidence" value="ECO:0007669"/>
    <property type="project" value="UniProtKB-SubCell"/>
</dbReference>
<dbReference type="GO" id="GO:0005524">
    <property type="term" value="F:ATP binding"/>
    <property type="evidence" value="ECO:0007669"/>
    <property type="project" value="UniProtKB-UniRule"/>
</dbReference>
<dbReference type="GO" id="GO:0046872">
    <property type="term" value="F:metal ion binding"/>
    <property type="evidence" value="ECO:0007669"/>
    <property type="project" value="UniProtKB-KW"/>
</dbReference>
<dbReference type="GO" id="GO:0004829">
    <property type="term" value="F:threonine-tRNA ligase activity"/>
    <property type="evidence" value="ECO:0007669"/>
    <property type="project" value="UniProtKB-UniRule"/>
</dbReference>
<dbReference type="GO" id="GO:0000049">
    <property type="term" value="F:tRNA binding"/>
    <property type="evidence" value="ECO:0007669"/>
    <property type="project" value="UniProtKB-KW"/>
</dbReference>
<dbReference type="GO" id="GO:0006435">
    <property type="term" value="P:threonyl-tRNA aminoacylation"/>
    <property type="evidence" value="ECO:0007669"/>
    <property type="project" value="UniProtKB-UniRule"/>
</dbReference>
<dbReference type="CDD" id="cd01667">
    <property type="entry name" value="TGS_ThrRS"/>
    <property type="match status" value="1"/>
</dbReference>
<dbReference type="CDD" id="cd00860">
    <property type="entry name" value="ThrRS_anticodon"/>
    <property type="match status" value="1"/>
</dbReference>
<dbReference type="CDD" id="cd00771">
    <property type="entry name" value="ThrRS_core"/>
    <property type="match status" value="1"/>
</dbReference>
<dbReference type="FunFam" id="3.30.54.20:FF:000002">
    <property type="entry name" value="Threonine--tRNA ligase"/>
    <property type="match status" value="1"/>
</dbReference>
<dbReference type="FunFam" id="3.30.930.10:FF:000002">
    <property type="entry name" value="Threonine--tRNA ligase"/>
    <property type="match status" value="1"/>
</dbReference>
<dbReference type="FunFam" id="3.40.50.800:FF:000001">
    <property type="entry name" value="Threonine--tRNA ligase"/>
    <property type="match status" value="1"/>
</dbReference>
<dbReference type="FunFam" id="3.30.980.10:FF:000005">
    <property type="entry name" value="Threonyl-tRNA synthetase, mitochondrial"/>
    <property type="match status" value="1"/>
</dbReference>
<dbReference type="Gene3D" id="3.10.20.30">
    <property type="match status" value="1"/>
</dbReference>
<dbReference type="Gene3D" id="3.30.54.20">
    <property type="match status" value="1"/>
</dbReference>
<dbReference type="Gene3D" id="3.40.50.800">
    <property type="entry name" value="Anticodon-binding domain"/>
    <property type="match status" value="1"/>
</dbReference>
<dbReference type="Gene3D" id="3.30.930.10">
    <property type="entry name" value="Bira Bifunctional Protein, Domain 2"/>
    <property type="match status" value="1"/>
</dbReference>
<dbReference type="Gene3D" id="3.30.980.10">
    <property type="entry name" value="Threonyl-trna Synthetase, Chain A, domain 2"/>
    <property type="match status" value="1"/>
</dbReference>
<dbReference type="HAMAP" id="MF_00184">
    <property type="entry name" value="Thr_tRNA_synth"/>
    <property type="match status" value="1"/>
</dbReference>
<dbReference type="InterPro" id="IPR002314">
    <property type="entry name" value="aa-tRNA-synt_IIb"/>
</dbReference>
<dbReference type="InterPro" id="IPR006195">
    <property type="entry name" value="aa-tRNA-synth_II"/>
</dbReference>
<dbReference type="InterPro" id="IPR045864">
    <property type="entry name" value="aa-tRNA-synth_II/BPL/LPL"/>
</dbReference>
<dbReference type="InterPro" id="IPR004154">
    <property type="entry name" value="Anticodon-bd"/>
</dbReference>
<dbReference type="InterPro" id="IPR036621">
    <property type="entry name" value="Anticodon-bd_dom_sf"/>
</dbReference>
<dbReference type="InterPro" id="IPR012675">
    <property type="entry name" value="Beta-grasp_dom_sf"/>
</dbReference>
<dbReference type="InterPro" id="IPR004095">
    <property type="entry name" value="TGS"/>
</dbReference>
<dbReference type="InterPro" id="IPR012676">
    <property type="entry name" value="TGS-like"/>
</dbReference>
<dbReference type="InterPro" id="IPR002320">
    <property type="entry name" value="Thr-tRNA-ligase_IIa"/>
</dbReference>
<dbReference type="InterPro" id="IPR018163">
    <property type="entry name" value="Thr/Ala-tRNA-synth_IIc_edit"/>
</dbReference>
<dbReference type="InterPro" id="IPR047246">
    <property type="entry name" value="ThrRS_anticodon"/>
</dbReference>
<dbReference type="InterPro" id="IPR033728">
    <property type="entry name" value="ThrRS_core"/>
</dbReference>
<dbReference type="InterPro" id="IPR012947">
    <property type="entry name" value="tRNA_SAD"/>
</dbReference>
<dbReference type="NCBIfam" id="TIGR00418">
    <property type="entry name" value="thrS"/>
    <property type="match status" value="1"/>
</dbReference>
<dbReference type="PANTHER" id="PTHR11451:SF44">
    <property type="entry name" value="THREONINE--TRNA LIGASE, CHLOROPLASTIC_MITOCHONDRIAL 2"/>
    <property type="match status" value="1"/>
</dbReference>
<dbReference type="PANTHER" id="PTHR11451">
    <property type="entry name" value="THREONINE-TRNA LIGASE"/>
    <property type="match status" value="1"/>
</dbReference>
<dbReference type="Pfam" id="PF03129">
    <property type="entry name" value="HGTP_anticodon"/>
    <property type="match status" value="1"/>
</dbReference>
<dbReference type="Pfam" id="PF00587">
    <property type="entry name" value="tRNA-synt_2b"/>
    <property type="match status" value="1"/>
</dbReference>
<dbReference type="Pfam" id="PF07973">
    <property type="entry name" value="tRNA_SAD"/>
    <property type="match status" value="1"/>
</dbReference>
<dbReference type="PRINTS" id="PR01047">
    <property type="entry name" value="TRNASYNTHTHR"/>
</dbReference>
<dbReference type="SMART" id="SM00863">
    <property type="entry name" value="tRNA_SAD"/>
    <property type="match status" value="1"/>
</dbReference>
<dbReference type="SUPFAM" id="SSF52954">
    <property type="entry name" value="Class II aaRS ABD-related"/>
    <property type="match status" value="1"/>
</dbReference>
<dbReference type="SUPFAM" id="SSF55681">
    <property type="entry name" value="Class II aaRS and biotin synthetases"/>
    <property type="match status" value="1"/>
</dbReference>
<dbReference type="SUPFAM" id="SSF81271">
    <property type="entry name" value="TGS-like"/>
    <property type="match status" value="1"/>
</dbReference>
<dbReference type="SUPFAM" id="SSF55186">
    <property type="entry name" value="ThrRS/AlaRS common domain"/>
    <property type="match status" value="1"/>
</dbReference>
<dbReference type="PROSITE" id="PS50862">
    <property type="entry name" value="AA_TRNA_LIGASE_II"/>
    <property type="match status" value="1"/>
</dbReference>
<dbReference type="PROSITE" id="PS51880">
    <property type="entry name" value="TGS"/>
    <property type="match status" value="1"/>
</dbReference>
<proteinExistence type="inferred from homology"/>
<comment type="function">
    <text evidence="1">Catalyzes the attachment of threonine to tRNA(Thr) in a two-step reaction: L-threonine is first activated by ATP to form Thr-AMP and then transferred to the acceptor end of tRNA(Thr). Also edits incorrectly charged L-seryl-tRNA(Thr).</text>
</comment>
<comment type="catalytic activity">
    <reaction evidence="1">
        <text>tRNA(Thr) + L-threonine + ATP = L-threonyl-tRNA(Thr) + AMP + diphosphate + H(+)</text>
        <dbReference type="Rhea" id="RHEA:24624"/>
        <dbReference type="Rhea" id="RHEA-COMP:9670"/>
        <dbReference type="Rhea" id="RHEA-COMP:9704"/>
        <dbReference type="ChEBI" id="CHEBI:15378"/>
        <dbReference type="ChEBI" id="CHEBI:30616"/>
        <dbReference type="ChEBI" id="CHEBI:33019"/>
        <dbReference type="ChEBI" id="CHEBI:57926"/>
        <dbReference type="ChEBI" id="CHEBI:78442"/>
        <dbReference type="ChEBI" id="CHEBI:78534"/>
        <dbReference type="ChEBI" id="CHEBI:456215"/>
        <dbReference type="EC" id="6.1.1.3"/>
    </reaction>
</comment>
<comment type="cofactor">
    <cofactor evidence="1">
        <name>Zn(2+)</name>
        <dbReference type="ChEBI" id="CHEBI:29105"/>
    </cofactor>
    <text evidence="1">Binds 1 zinc ion per subunit.</text>
</comment>
<comment type="subunit">
    <text evidence="1">Homodimer.</text>
</comment>
<comment type="subcellular location">
    <subcellularLocation>
        <location evidence="1">Cytoplasm</location>
    </subcellularLocation>
</comment>
<comment type="similarity">
    <text evidence="1">Belongs to the class-II aminoacyl-tRNA synthetase family.</text>
</comment>
<accession>Q5H9Z4</accession>
<accession>Q5FCC1</accession>
<protein>
    <recommendedName>
        <fullName evidence="1">Threonine--tRNA ligase</fullName>
        <ecNumber evidence="1">6.1.1.3</ecNumber>
    </recommendedName>
    <alternativeName>
        <fullName evidence="1">Threonyl-tRNA synthetase</fullName>
        <shortName evidence="1">ThrRS</shortName>
    </alternativeName>
</protein>
<feature type="chain" id="PRO_0000100977" description="Threonine--tRNA ligase">
    <location>
        <begin position="1"/>
        <end position="633"/>
    </location>
</feature>
<feature type="domain" description="TGS" evidence="2">
    <location>
        <begin position="1"/>
        <end position="61"/>
    </location>
</feature>
<feature type="region of interest" description="Catalytic" evidence="1">
    <location>
        <begin position="242"/>
        <end position="533"/>
    </location>
</feature>
<feature type="binding site" evidence="1">
    <location>
        <position position="333"/>
    </location>
    <ligand>
        <name>Zn(2+)</name>
        <dbReference type="ChEBI" id="CHEBI:29105"/>
    </ligand>
</feature>
<feature type="binding site" evidence="1">
    <location>
        <position position="384"/>
    </location>
    <ligand>
        <name>Zn(2+)</name>
        <dbReference type="ChEBI" id="CHEBI:29105"/>
    </ligand>
</feature>
<feature type="binding site" evidence="1">
    <location>
        <position position="510"/>
    </location>
    <ligand>
        <name>Zn(2+)</name>
        <dbReference type="ChEBI" id="CHEBI:29105"/>
    </ligand>
</feature>
<organism>
    <name type="scientific">Ehrlichia ruminantium (strain Welgevonden)</name>
    <dbReference type="NCBI Taxonomy" id="254945"/>
    <lineage>
        <taxon>Bacteria</taxon>
        <taxon>Pseudomonadati</taxon>
        <taxon>Pseudomonadota</taxon>
        <taxon>Alphaproteobacteria</taxon>
        <taxon>Rickettsiales</taxon>
        <taxon>Anaplasmataceae</taxon>
        <taxon>Ehrlichia</taxon>
    </lineage>
</organism>
<gene>
    <name evidence="1" type="primary">thrS</name>
    <name type="ordered locus">Erum8890</name>
    <name type="ordered locus">ERWE_CDS_09410</name>
</gene>
<reference key="1">
    <citation type="journal article" date="2005" name="Proc. Natl. Acad. Sci. U.S.A.">
        <title>The genome of the heartwater agent Ehrlichia ruminantium contains multiple tandem repeats of actively variable copy number.</title>
        <authorList>
            <person name="Collins N.E."/>
            <person name="Liebenberg J."/>
            <person name="de Villiers E.P."/>
            <person name="Brayton K.A."/>
            <person name="Louw E."/>
            <person name="Pretorius A."/>
            <person name="Faber F.E."/>
            <person name="van Heerden H."/>
            <person name="Josemans A."/>
            <person name="van Kleef M."/>
            <person name="Steyn H.C."/>
            <person name="van Strijp M.F."/>
            <person name="Zweygarth E."/>
            <person name="Jongejan F."/>
            <person name="Maillard J.C."/>
            <person name="Berthier D."/>
            <person name="Botha M."/>
            <person name="Joubert F."/>
            <person name="Corton C.H."/>
            <person name="Thomson N.R."/>
            <person name="Allsopp M.T."/>
            <person name="Allsopp B.A."/>
        </authorList>
    </citation>
    <scope>NUCLEOTIDE SEQUENCE [LARGE SCALE GENOMIC DNA]</scope>
    <source>
        <strain>Welgevonden</strain>
    </source>
</reference>
<reference key="2">
    <citation type="journal article" date="2006" name="J. Bacteriol.">
        <title>Comparative genomic analysis of three strains of Ehrlichia ruminantium reveals an active process of genome size plasticity.</title>
        <authorList>
            <person name="Frutos R."/>
            <person name="Viari A."/>
            <person name="Ferraz C."/>
            <person name="Morgat A."/>
            <person name="Eychenie S."/>
            <person name="Kandassamy Y."/>
            <person name="Chantal I."/>
            <person name="Bensaid A."/>
            <person name="Coissac E."/>
            <person name="Vachiery N."/>
            <person name="Demaille J."/>
            <person name="Martinez D."/>
        </authorList>
    </citation>
    <scope>NUCLEOTIDE SEQUENCE [LARGE SCALE GENOMIC DNA]</scope>
    <source>
        <strain>Welgevonden</strain>
    </source>
</reference>
<keyword id="KW-0030">Aminoacyl-tRNA synthetase</keyword>
<keyword id="KW-0067">ATP-binding</keyword>
<keyword id="KW-0963">Cytoplasm</keyword>
<keyword id="KW-0436">Ligase</keyword>
<keyword id="KW-0479">Metal-binding</keyword>
<keyword id="KW-0547">Nucleotide-binding</keyword>
<keyword id="KW-0648">Protein biosynthesis</keyword>
<keyword id="KW-0694">RNA-binding</keyword>
<keyword id="KW-0820">tRNA-binding</keyword>
<keyword id="KW-0862">Zinc</keyword>
<sequence length="633" mass="73122">MINVYFSDNSCKQFLPGIKGSDIITHLFPELLNKAIAIKINDKSLDLSTEITEDCKFEVITLDSDEGLDIIRHDTAHIMAQAIKEMFPEVKTVVGPTIKDGFYYDFSTDHIFSSNELEKIEEKMREIIKKNESFIREVWTREEAIRFFSNKGEDYKVKIIAKIPIHENITVYKQGSFIDLCRGPHAPSTKISKAFKLTKVSGSYWEGNTNNAQLQRIYGTAWRTEEELKLYLNNLIEVEKRDHRKIGKELELFHIQNEALGQIFWHEKGLIIYRIIENYIRKKLENNGYIEVKTPYLLSKTLWEQSGHWDKFREHMFLSEIDNKVVAIKPMNCPCHVQIFNSKIRSYKDLPLRMAEFGTCHRYESSGALHGLMRVRSFTQDDAHIFCTEDQIIEEALKFCNLLMEVYEVFGFKDILVKFSDRPEKRAGSDKIWDKAEEALKASVKAANLNYVLNPGDGAFYGPKLEFTLKDAIGREWQCGTLQMDFVLPERLGAYYTGSDGKKHHPIMLHRAILGTIERFIGILIEHHSGKLPIWLAPVQLSILTITEDAIDYAISLKHKAMKQNIRAEVDITNEKINYKIRSHISKKIPVLWIIGKKEIETESVSIRYLESKDQHIMSSDKALKTLLSCASI</sequence>
<name>SYT_EHRRW</name>
<evidence type="ECO:0000255" key="1">
    <source>
        <dbReference type="HAMAP-Rule" id="MF_00184"/>
    </source>
</evidence>
<evidence type="ECO:0000255" key="2">
    <source>
        <dbReference type="PROSITE-ProRule" id="PRU01228"/>
    </source>
</evidence>